<reference key="1">
    <citation type="journal article" date="2000" name="Nature">
        <title>Genome sequence of the endocellular bacterial symbiont of aphids Buchnera sp. APS.</title>
        <authorList>
            <person name="Shigenobu S."/>
            <person name="Watanabe H."/>
            <person name="Hattori M."/>
            <person name="Sakaki Y."/>
            <person name="Ishikawa H."/>
        </authorList>
    </citation>
    <scope>NUCLEOTIDE SEQUENCE [LARGE SCALE GENOMIC DNA]</scope>
    <source>
        <strain>APS</strain>
    </source>
</reference>
<name>CYSG_BUCAI</name>
<sequence length="473" mass="52874">MNYLPIFIDLKSKNVLVIGAGEVGLNKIRILLRAKAKVNVIAKELCSEVKLLLRDQKINWLSKNFDLIYLNKIFLVVSATNDIKLNQYIFKKCNERCVLVNIVDDKLKCSFIFPSIIDRSPLIVAISSGGTAPVLLRLLREKIEAILPNKLGDVAKIAGKWRLAIKKHFSNFLERRKFWEKLFHSIFVEHILNGNKEQAINVLKKNMNQNISLTGEIILVGAGPGDSGLLTLRGLQVLQQADVVLYDYLVSEDILDLIRRDAKRICVGKRVGLKNITQNEIIKLLIFFAQKGKKVVRLKGGDPFIFGRGSEEIEAAKDAGIHFQVVPGITSAIGIAAYTGIPLTHRKYSQGVIFITGHKCIDGFLNNWSILSDPSYTLVVYMGTLKAVYIAQKLITFGRSKLTPIAIIVQGTTIHQKVIVGCLGEIEKIIPFAATPSLLIIGDVVHLHKKLAWFQSENILKKIKNKFSTLTFI</sequence>
<accession>P57500</accession>
<dbReference type="EC" id="2.1.1.107" evidence="1"/>
<dbReference type="EC" id="1.3.1.76" evidence="1"/>
<dbReference type="EC" id="4.99.1.4" evidence="1"/>
<dbReference type="EMBL" id="BA000003">
    <property type="protein sequence ID" value="BAB13123.1"/>
    <property type="molecule type" value="Genomic_DNA"/>
</dbReference>
<dbReference type="RefSeq" id="NP_240237.1">
    <property type="nucleotide sequence ID" value="NC_002528.1"/>
</dbReference>
<dbReference type="RefSeq" id="WP_009874378.1">
    <property type="nucleotide sequence ID" value="NC_002528.1"/>
</dbReference>
<dbReference type="SMR" id="P57500"/>
<dbReference type="STRING" id="563178.BUAP5A_418"/>
<dbReference type="EnsemblBacteria" id="BAB13123">
    <property type="protein sequence ID" value="BAB13123"/>
    <property type="gene ID" value="BAB13123"/>
</dbReference>
<dbReference type="KEGG" id="buc:BU425"/>
<dbReference type="PATRIC" id="fig|107806.10.peg.434"/>
<dbReference type="eggNOG" id="COG0007">
    <property type="taxonomic scope" value="Bacteria"/>
</dbReference>
<dbReference type="eggNOG" id="COG1648">
    <property type="taxonomic scope" value="Bacteria"/>
</dbReference>
<dbReference type="HOGENOM" id="CLU_011276_2_0_6"/>
<dbReference type="UniPathway" id="UPA00148">
    <property type="reaction ID" value="UER00211"/>
</dbReference>
<dbReference type="UniPathway" id="UPA00148">
    <property type="reaction ID" value="UER00222"/>
</dbReference>
<dbReference type="UniPathway" id="UPA00262">
    <property type="reaction ID" value="UER00211"/>
</dbReference>
<dbReference type="UniPathway" id="UPA00262">
    <property type="reaction ID" value="UER00222"/>
</dbReference>
<dbReference type="UniPathway" id="UPA00262">
    <property type="reaction ID" value="UER00376"/>
</dbReference>
<dbReference type="Proteomes" id="UP000001806">
    <property type="component" value="Chromosome"/>
</dbReference>
<dbReference type="GO" id="GO:0051287">
    <property type="term" value="F:NAD binding"/>
    <property type="evidence" value="ECO:0007669"/>
    <property type="project" value="InterPro"/>
</dbReference>
<dbReference type="GO" id="GO:0043115">
    <property type="term" value="F:precorrin-2 dehydrogenase activity"/>
    <property type="evidence" value="ECO:0007669"/>
    <property type="project" value="UniProtKB-UniRule"/>
</dbReference>
<dbReference type="GO" id="GO:0051266">
    <property type="term" value="F:sirohydrochlorin ferrochelatase activity"/>
    <property type="evidence" value="ECO:0007669"/>
    <property type="project" value="UniProtKB-EC"/>
</dbReference>
<dbReference type="GO" id="GO:0004851">
    <property type="term" value="F:uroporphyrin-III C-methyltransferase activity"/>
    <property type="evidence" value="ECO:0007669"/>
    <property type="project" value="UniProtKB-UniRule"/>
</dbReference>
<dbReference type="GO" id="GO:0009236">
    <property type="term" value="P:cobalamin biosynthetic process"/>
    <property type="evidence" value="ECO:0007669"/>
    <property type="project" value="UniProtKB-UniRule"/>
</dbReference>
<dbReference type="GO" id="GO:0032259">
    <property type="term" value="P:methylation"/>
    <property type="evidence" value="ECO:0007669"/>
    <property type="project" value="UniProtKB-KW"/>
</dbReference>
<dbReference type="GO" id="GO:0019354">
    <property type="term" value="P:siroheme biosynthetic process"/>
    <property type="evidence" value="ECO:0007669"/>
    <property type="project" value="UniProtKB-UniRule"/>
</dbReference>
<dbReference type="CDD" id="cd11642">
    <property type="entry name" value="SUMT"/>
    <property type="match status" value="1"/>
</dbReference>
<dbReference type="FunFam" id="3.30.160.110:FF:000001">
    <property type="entry name" value="Siroheme synthase"/>
    <property type="match status" value="1"/>
</dbReference>
<dbReference type="FunFam" id="3.30.950.10:FF:000001">
    <property type="entry name" value="Siroheme synthase"/>
    <property type="match status" value="1"/>
</dbReference>
<dbReference type="FunFam" id="3.40.1010.10:FF:000001">
    <property type="entry name" value="Siroheme synthase"/>
    <property type="match status" value="1"/>
</dbReference>
<dbReference type="Gene3D" id="3.40.1010.10">
    <property type="entry name" value="Cobalt-precorrin-4 Transmethylase, Domain 1"/>
    <property type="match status" value="1"/>
</dbReference>
<dbReference type="Gene3D" id="3.30.950.10">
    <property type="entry name" value="Methyltransferase, Cobalt-precorrin-4 Transmethylase, Domain 2"/>
    <property type="match status" value="1"/>
</dbReference>
<dbReference type="Gene3D" id="3.40.50.720">
    <property type="entry name" value="NAD(P)-binding Rossmann-like Domain"/>
    <property type="match status" value="1"/>
</dbReference>
<dbReference type="Gene3D" id="1.10.8.210">
    <property type="entry name" value="Sirohaem synthase, dimerisation domain"/>
    <property type="match status" value="1"/>
</dbReference>
<dbReference type="Gene3D" id="3.30.160.110">
    <property type="entry name" value="Siroheme synthase, domain 2"/>
    <property type="match status" value="1"/>
</dbReference>
<dbReference type="HAMAP" id="MF_01646">
    <property type="entry name" value="Siroheme_synth"/>
    <property type="match status" value="1"/>
</dbReference>
<dbReference type="InterPro" id="IPR000878">
    <property type="entry name" value="4pyrrol_Mease"/>
</dbReference>
<dbReference type="InterPro" id="IPR035996">
    <property type="entry name" value="4pyrrol_Methylase_sf"/>
</dbReference>
<dbReference type="InterPro" id="IPR014777">
    <property type="entry name" value="4pyrrole_Mease_sub1"/>
</dbReference>
<dbReference type="InterPro" id="IPR014776">
    <property type="entry name" value="4pyrrole_Mease_sub2"/>
</dbReference>
<dbReference type="InterPro" id="IPR006366">
    <property type="entry name" value="CobA/CysG_C"/>
</dbReference>
<dbReference type="InterPro" id="IPR036291">
    <property type="entry name" value="NAD(P)-bd_dom_sf"/>
</dbReference>
<dbReference type="InterPro" id="IPR050161">
    <property type="entry name" value="Siro_Cobalamin_biosynth"/>
</dbReference>
<dbReference type="InterPro" id="IPR037115">
    <property type="entry name" value="Sirohaem_synt_dimer_dom_sf"/>
</dbReference>
<dbReference type="InterPro" id="IPR012409">
    <property type="entry name" value="Sirohaem_synth"/>
</dbReference>
<dbReference type="InterPro" id="IPR019478">
    <property type="entry name" value="Sirohaem_synthase_dimer_dom"/>
</dbReference>
<dbReference type="InterPro" id="IPR006367">
    <property type="entry name" value="Sirohaem_synthase_N"/>
</dbReference>
<dbReference type="InterPro" id="IPR003043">
    <property type="entry name" value="Uropor_MeTrfase_CS"/>
</dbReference>
<dbReference type="NCBIfam" id="TIGR01469">
    <property type="entry name" value="cobA_cysG_Cterm"/>
    <property type="match status" value="1"/>
</dbReference>
<dbReference type="NCBIfam" id="TIGR01470">
    <property type="entry name" value="cysG_Nterm"/>
    <property type="match status" value="1"/>
</dbReference>
<dbReference type="NCBIfam" id="NF004790">
    <property type="entry name" value="PRK06136.1"/>
    <property type="match status" value="1"/>
</dbReference>
<dbReference type="NCBIfam" id="NF007922">
    <property type="entry name" value="PRK10637.1"/>
    <property type="match status" value="1"/>
</dbReference>
<dbReference type="PANTHER" id="PTHR45790:SF1">
    <property type="entry name" value="SIROHEME SYNTHASE"/>
    <property type="match status" value="1"/>
</dbReference>
<dbReference type="PANTHER" id="PTHR45790">
    <property type="entry name" value="SIROHEME SYNTHASE-RELATED"/>
    <property type="match status" value="1"/>
</dbReference>
<dbReference type="Pfam" id="PF10414">
    <property type="entry name" value="CysG_dimeriser"/>
    <property type="match status" value="1"/>
</dbReference>
<dbReference type="Pfam" id="PF13241">
    <property type="entry name" value="NAD_binding_7"/>
    <property type="match status" value="1"/>
</dbReference>
<dbReference type="Pfam" id="PF00590">
    <property type="entry name" value="TP_methylase"/>
    <property type="match status" value="1"/>
</dbReference>
<dbReference type="PIRSF" id="PIRSF036426">
    <property type="entry name" value="Sirohaem_synth"/>
    <property type="match status" value="1"/>
</dbReference>
<dbReference type="SUPFAM" id="SSF51735">
    <property type="entry name" value="NAD(P)-binding Rossmann-fold domains"/>
    <property type="match status" value="1"/>
</dbReference>
<dbReference type="SUPFAM" id="SSF75615">
    <property type="entry name" value="Siroheme synthase middle domains-like"/>
    <property type="match status" value="1"/>
</dbReference>
<dbReference type="SUPFAM" id="SSF53790">
    <property type="entry name" value="Tetrapyrrole methylase"/>
    <property type="match status" value="1"/>
</dbReference>
<dbReference type="PROSITE" id="PS00839">
    <property type="entry name" value="SUMT_1"/>
    <property type="match status" value="1"/>
</dbReference>
<dbReference type="PROSITE" id="PS00840">
    <property type="entry name" value="SUMT_2"/>
    <property type="match status" value="1"/>
</dbReference>
<comment type="function">
    <text evidence="1">Multifunctional enzyme that catalyzes the SAM-dependent methylations of uroporphyrinogen III at position C-2 and C-7 to form precorrin-2 via precorrin-1. Then it catalyzes the NAD-dependent ring dehydrogenation of precorrin-2 to yield sirohydrochlorin. Finally, it catalyzes the ferrochelation of sirohydrochlorin to yield siroheme.</text>
</comment>
<comment type="catalytic activity">
    <reaction evidence="1">
        <text>uroporphyrinogen III + 2 S-adenosyl-L-methionine = precorrin-2 + 2 S-adenosyl-L-homocysteine + H(+)</text>
        <dbReference type="Rhea" id="RHEA:32459"/>
        <dbReference type="ChEBI" id="CHEBI:15378"/>
        <dbReference type="ChEBI" id="CHEBI:57308"/>
        <dbReference type="ChEBI" id="CHEBI:57856"/>
        <dbReference type="ChEBI" id="CHEBI:58827"/>
        <dbReference type="ChEBI" id="CHEBI:59789"/>
        <dbReference type="EC" id="2.1.1.107"/>
    </reaction>
</comment>
<comment type="catalytic activity">
    <reaction evidence="1">
        <text>precorrin-2 + NAD(+) = sirohydrochlorin + NADH + 2 H(+)</text>
        <dbReference type="Rhea" id="RHEA:15613"/>
        <dbReference type="ChEBI" id="CHEBI:15378"/>
        <dbReference type="ChEBI" id="CHEBI:57540"/>
        <dbReference type="ChEBI" id="CHEBI:57945"/>
        <dbReference type="ChEBI" id="CHEBI:58351"/>
        <dbReference type="ChEBI" id="CHEBI:58827"/>
        <dbReference type="EC" id="1.3.1.76"/>
    </reaction>
</comment>
<comment type="catalytic activity">
    <reaction evidence="1">
        <text>siroheme + 2 H(+) = sirohydrochlorin + Fe(2+)</text>
        <dbReference type="Rhea" id="RHEA:24360"/>
        <dbReference type="ChEBI" id="CHEBI:15378"/>
        <dbReference type="ChEBI" id="CHEBI:29033"/>
        <dbReference type="ChEBI" id="CHEBI:58351"/>
        <dbReference type="ChEBI" id="CHEBI:60052"/>
        <dbReference type="EC" id="4.99.1.4"/>
    </reaction>
</comment>
<comment type="pathway">
    <text evidence="1">Cofactor biosynthesis; adenosylcobalamin biosynthesis; precorrin-2 from uroporphyrinogen III: step 1/1.</text>
</comment>
<comment type="pathway">
    <text evidence="1">Cofactor biosynthesis; adenosylcobalamin biosynthesis; sirohydrochlorin from precorrin-2: step 1/1.</text>
</comment>
<comment type="pathway">
    <text evidence="1">Porphyrin-containing compound metabolism; siroheme biosynthesis; precorrin-2 from uroporphyrinogen III: step 1/1.</text>
</comment>
<comment type="pathway">
    <text evidence="1">Porphyrin-containing compound metabolism; siroheme biosynthesis; siroheme from sirohydrochlorin: step 1/1.</text>
</comment>
<comment type="pathway">
    <text evidence="1">Porphyrin-containing compound metabolism; siroheme biosynthesis; sirohydrochlorin from precorrin-2: step 1/1.</text>
</comment>
<comment type="similarity">
    <text evidence="1">In the N-terminal section; belongs to the precorrin-2 dehydrogenase / sirohydrochlorin ferrochelatase family.</text>
</comment>
<comment type="similarity">
    <text evidence="1">In the C-terminal section; belongs to the precorrin methyltransferase family.</text>
</comment>
<proteinExistence type="inferred from homology"/>
<organism>
    <name type="scientific">Buchnera aphidicola subsp. Acyrthosiphon pisum (strain APS)</name>
    <name type="common">Acyrthosiphon pisum symbiotic bacterium</name>
    <dbReference type="NCBI Taxonomy" id="107806"/>
    <lineage>
        <taxon>Bacteria</taxon>
        <taxon>Pseudomonadati</taxon>
        <taxon>Pseudomonadota</taxon>
        <taxon>Gammaproteobacteria</taxon>
        <taxon>Enterobacterales</taxon>
        <taxon>Erwiniaceae</taxon>
        <taxon>Buchnera</taxon>
    </lineage>
</organism>
<protein>
    <recommendedName>
        <fullName evidence="1">Siroheme synthase</fullName>
    </recommendedName>
    <domain>
        <recommendedName>
            <fullName evidence="1">Uroporphyrinogen-III C-methyltransferase</fullName>
            <shortName evidence="1">Urogen III methylase</shortName>
            <ecNumber evidence="1">2.1.1.107</ecNumber>
        </recommendedName>
        <alternativeName>
            <fullName evidence="1">SUMT</fullName>
        </alternativeName>
        <alternativeName>
            <fullName evidence="1">Uroporphyrinogen III methylase</fullName>
            <shortName evidence="1">UROM</shortName>
        </alternativeName>
    </domain>
    <domain>
        <recommendedName>
            <fullName evidence="1">Precorrin-2 dehydrogenase</fullName>
            <ecNumber evidence="1">1.3.1.76</ecNumber>
        </recommendedName>
    </domain>
    <domain>
        <recommendedName>
            <fullName evidence="1">Sirohydrochlorin ferrochelatase</fullName>
            <ecNumber evidence="1">4.99.1.4</ecNumber>
        </recommendedName>
    </domain>
</protein>
<feature type="chain" id="PRO_0000150377" description="Siroheme synthase">
    <location>
        <begin position="1"/>
        <end position="473"/>
    </location>
</feature>
<feature type="region of interest" description="Precorrin-2 dehydrogenase /sirohydrochlorin ferrochelatase" evidence="1">
    <location>
        <begin position="1"/>
        <end position="203"/>
    </location>
</feature>
<feature type="region of interest" description="Uroporphyrinogen-III C-methyltransferase" evidence="1">
    <location>
        <begin position="215"/>
        <end position="473"/>
    </location>
</feature>
<feature type="active site" description="Proton acceptor" evidence="1">
    <location>
        <position position="247"/>
    </location>
</feature>
<feature type="active site" description="Proton donor" evidence="1">
    <location>
        <position position="269"/>
    </location>
</feature>
<feature type="binding site" evidence="1">
    <location>
        <begin position="22"/>
        <end position="23"/>
    </location>
    <ligand>
        <name>NAD(+)</name>
        <dbReference type="ChEBI" id="CHEBI:57540"/>
    </ligand>
</feature>
<feature type="binding site" evidence="1">
    <location>
        <begin position="43"/>
        <end position="44"/>
    </location>
    <ligand>
        <name>NAD(+)</name>
        <dbReference type="ChEBI" id="CHEBI:57540"/>
    </ligand>
</feature>
<feature type="binding site" evidence="1">
    <location>
        <position position="224"/>
    </location>
    <ligand>
        <name>S-adenosyl-L-methionine</name>
        <dbReference type="ChEBI" id="CHEBI:59789"/>
    </ligand>
</feature>
<feature type="binding site" evidence="1">
    <location>
        <begin position="300"/>
        <end position="302"/>
    </location>
    <ligand>
        <name>S-adenosyl-L-methionine</name>
        <dbReference type="ChEBI" id="CHEBI:59789"/>
    </ligand>
</feature>
<feature type="binding site" evidence="1">
    <location>
        <position position="305"/>
    </location>
    <ligand>
        <name>S-adenosyl-L-methionine</name>
        <dbReference type="ChEBI" id="CHEBI:59789"/>
    </ligand>
</feature>
<feature type="binding site" evidence="1">
    <location>
        <position position="382"/>
    </location>
    <ligand>
        <name>S-adenosyl-L-methionine</name>
        <dbReference type="ChEBI" id="CHEBI:59789"/>
    </ligand>
</feature>
<feature type="binding site" evidence="1">
    <location>
        <position position="411"/>
    </location>
    <ligand>
        <name>S-adenosyl-L-methionine</name>
        <dbReference type="ChEBI" id="CHEBI:59789"/>
    </ligand>
</feature>
<feature type="modified residue" description="Phosphoserine" evidence="1">
    <location>
        <position position="128"/>
    </location>
</feature>
<keyword id="KW-0169">Cobalamin biosynthesis</keyword>
<keyword id="KW-0456">Lyase</keyword>
<keyword id="KW-0489">Methyltransferase</keyword>
<keyword id="KW-0511">Multifunctional enzyme</keyword>
<keyword id="KW-0520">NAD</keyword>
<keyword id="KW-0560">Oxidoreductase</keyword>
<keyword id="KW-0597">Phosphoprotein</keyword>
<keyword id="KW-0627">Porphyrin biosynthesis</keyword>
<keyword id="KW-1185">Reference proteome</keyword>
<keyword id="KW-0949">S-adenosyl-L-methionine</keyword>
<keyword id="KW-0808">Transferase</keyword>
<evidence type="ECO:0000255" key="1">
    <source>
        <dbReference type="HAMAP-Rule" id="MF_01646"/>
    </source>
</evidence>
<gene>
    <name evidence="1" type="primary">cysG</name>
    <name type="ordered locus">BU425</name>
</gene>